<evidence type="ECO:0000255" key="1">
    <source>
        <dbReference type="HAMAP-Rule" id="MF_00600"/>
    </source>
</evidence>
<organism>
    <name type="scientific">Colwellia psychrerythraea (strain 34H / ATCC BAA-681)</name>
    <name type="common">Vibrio psychroerythus</name>
    <dbReference type="NCBI Taxonomy" id="167879"/>
    <lineage>
        <taxon>Bacteria</taxon>
        <taxon>Pseudomonadati</taxon>
        <taxon>Pseudomonadota</taxon>
        <taxon>Gammaproteobacteria</taxon>
        <taxon>Alteromonadales</taxon>
        <taxon>Colwelliaceae</taxon>
        <taxon>Colwellia</taxon>
    </lineage>
</organism>
<feature type="chain" id="PRO_0000256897" description="Chaperonin GroEL">
    <location>
        <begin position="1"/>
        <end position="548"/>
    </location>
</feature>
<feature type="binding site" evidence="1">
    <location>
        <begin position="30"/>
        <end position="33"/>
    </location>
    <ligand>
        <name>ATP</name>
        <dbReference type="ChEBI" id="CHEBI:30616"/>
    </ligand>
</feature>
<feature type="binding site" evidence="1">
    <location>
        <position position="51"/>
    </location>
    <ligand>
        <name>ATP</name>
        <dbReference type="ChEBI" id="CHEBI:30616"/>
    </ligand>
</feature>
<feature type="binding site" evidence="1">
    <location>
        <begin position="87"/>
        <end position="91"/>
    </location>
    <ligand>
        <name>ATP</name>
        <dbReference type="ChEBI" id="CHEBI:30616"/>
    </ligand>
</feature>
<feature type="binding site" evidence="1">
    <location>
        <position position="415"/>
    </location>
    <ligand>
        <name>ATP</name>
        <dbReference type="ChEBI" id="CHEBI:30616"/>
    </ligand>
</feature>
<feature type="binding site" evidence="1">
    <location>
        <position position="495"/>
    </location>
    <ligand>
        <name>ATP</name>
        <dbReference type="ChEBI" id="CHEBI:30616"/>
    </ligand>
</feature>
<proteinExistence type="inferred from homology"/>
<keyword id="KW-0067">ATP-binding</keyword>
<keyword id="KW-0143">Chaperone</keyword>
<keyword id="KW-0963">Cytoplasm</keyword>
<keyword id="KW-0413">Isomerase</keyword>
<keyword id="KW-0547">Nucleotide-binding</keyword>
<accession>Q487Q9</accession>
<gene>
    <name evidence="1" type="primary">groEL</name>
    <name evidence="1" type="synonym">groL</name>
    <name type="ordered locus">CPS_0957</name>
</gene>
<sequence>MAAKDVLFGNDARTKMLRGVNVLADAVKVTLGPKGRNVVIDKSFGGPTITKDGVTVAKEIELDDKFENMGAQMVKEVASKANDEAGDGTTTATVLAQAIVNEGLKSIAAGMNPMDLKRGIDKAVIAAVAALKDASTPVTDNKAIEQVGTISANSDETVGQIIATAMDKVGAEGVITVEEGQALTDELDVVEGMQFDRGYLSPYFINKQENGTVELENPFILLVDKKVSNIRELLTTLEAVAKSGKPLLIIAEDVEGEALATLVVNNMRGIVKVAAVKAPGFGDRRKAMLQDVATLTAGTVISEEIGMELEKATLEDLGQAKRVVISKDTTIIIDGIGEEADIKARVSQIRGQIEDSSSDYDKEKLQERLAKLAGGVAVIKIGAATEIEMKEKKARVEDALHATRAAVEEGVVAGGGVALVRAAEAIKDLEGINEDQTHGINVAIRAMEAPLRQIVANCGDEASVVLNEVRNGEGNYGYNAGNSTYGDMIAMGILDPTKVTRSALQFAASVAGLMLTTEAMITDAPQDSAPAMPDMGGMGGMGGMGGMM</sequence>
<reference key="1">
    <citation type="journal article" date="2005" name="Proc. Natl. Acad. Sci. U.S.A.">
        <title>The psychrophilic lifestyle as revealed by the genome sequence of Colwellia psychrerythraea 34H through genomic and proteomic analyses.</title>
        <authorList>
            <person name="Methe B.A."/>
            <person name="Nelson K.E."/>
            <person name="Deming J.W."/>
            <person name="Momen B."/>
            <person name="Melamud E."/>
            <person name="Zhang X."/>
            <person name="Moult J."/>
            <person name="Madupu R."/>
            <person name="Nelson W.C."/>
            <person name="Dodson R.J."/>
            <person name="Brinkac L.M."/>
            <person name="Daugherty S.C."/>
            <person name="Durkin A.S."/>
            <person name="DeBoy R.T."/>
            <person name="Kolonay J.F."/>
            <person name="Sullivan S.A."/>
            <person name="Zhou L."/>
            <person name="Davidsen T.M."/>
            <person name="Wu M."/>
            <person name="Huston A.L."/>
            <person name="Lewis M."/>
            <person name="Weaver B."/>
            <person name="Weidman J.F."/>
            <person name="Khouri H."/>
            <person name="Utterback T.R."/>
            <person name="Feldblyum T.V."/>
            <person name="Fraser C.M."/>
        </authorList>
    </citation>
    <scope>NUCLEOTIDE SEQUENCE [LARGE SCALE GENOMIC DNA]</scope>
    <source>
        <strain>34H / ATCC BAA-681</strain>
    </source>
</reference>
<name>CH60_COLP3</name>
<protein>
    <recommendedName>
        <fullName evidence="1">Chaperonin GroEL</fullName>
        <ecNumber evidence="1">5.6.1.7</ecNumber>
    </recommendedName>
    <alternativeName>
        <fullName evidence="1">60 kDa chaperonin</fullName>
    </alternativeName>
    <alternativeName>
        <fullName evidence="1">Chaperonin-60</fullName>
        <shortName evidence="1">Cpn60</shortName>
    </alternativeName>
</protein>
<dbReference type="EC" id="5.6.1.7" evidence="1"/>
<dbReference type="EMBL" id="CP000083">
    <property type="protein sequence ID" value="AAZ25956.1"/>
    <property type="molecule type" value="Genomic_DNA"/>
</dbReference>
<dbReference type="RefSeq" id="WP_011041800.1">
    <property type="nucleotide sequence ID" value="NC_003910.7"/>
</dbReference>
<dbReference type="SMR" id="Q487Q9"/>
<dbReference type="STRING" id="167879.CPS_0957"/>
<dbReference type="KEGG" id="cps:CPS_0957"/>
<dbReference type="eggNOG" id="COG0459">
    <property type="taxonomic scope" value="Bacteria"/>
</dbReference>
<dbReference type="HOGENOM" id="CLU_016503_3_0_6"/>
<dbReference type="Proteomes" id="UP000000547">
    <property type="component" value="Chromosome"/>
</dbReference>
<dbReference type="GO" id="GO:0005737">
    <property type="term" value="C:cytoplasm"/>
    <property type="evidence" value="ECO:0007669"/>
    <property type="project" value="UniProtKB-SubCell"/>
</dbReference>
<dbReference type="GO" id="GO:0005524">
    <property type="term" value="F:ATP binding"/>
    <property type="evidence" value="ECO:0007669"/>
    <property type="project" value="UniProtKB-UniRule"/>
</dbReference>
<dbReference type="GO" id="GO:0140662">
    <property type="term" value="F:ATP-dependent protein folding chaperone"/>
    <property type="evidence" value="ECO:0007669"/>
    <property type="project" value="InterPro"/>
</dbReference>
<dbReference type="GO" id="GO:0016853">
    <property type="term" value="F:isomerase activity"/>
    <property type="evidence" value="ECO:0007669"/>
    <property type="project" value="UniProtKB-KW"/>
</dbReference>
<dbReference type="GO" id="GO:0051082">
    <property type="term" value="F:unfolded protein binding"/>
    <property type="evidence" value="ECO:0007669"/>
    <property type="project" value="UniProtKB-UniRule"/>
</dbReference>
<dbReference type="GO" id="GO:0042026">
    <property type="term" value="P:protein refolding"/>
    <property type="evidence" value="ECO:0007669"/>
    <property type="project" value="UniProtKB-UniRule"/>
</dbReference>
<dbReference type="CDD" id="cd03344">
    <property type="entry name" value="GroEL"/>
    <property type="match status" value="1"/>
</dbReference>
<dbReference type="FunFam" id="1.10.560.10:FF:000001">
    <property type="entry name" value="60 kDa chaperonin"/>
    <property type="match status" value="1"/>
</dbReference>
<dbReference type="FunFam" id="3.50.7.10:FF:000001">
    <property type="entry name" value="60 kDa chaperonin"/>
    <property type="match status" value="1"/>
</dbReference>
<dbReference type="Gene3D" id="3.50.7.10">
    <property type="entry name" value="GroEL"/>
    <property type="match status" value="1"/>
</dbReference>
<dbReference type="Gene3D" id="1.10.560.10">
    <property type="entry name" value="GroEL-like equatorial domain"/>
    <property type="match status" value="1"/>
</dbReference>
<dbReference type="Gene3D" id="3.30.260.10">
    <property type="entry name" value="TCP-1-like chaperonin intermediate domain"/>
    <property type="match status" value="1"/>
</dbReference>
<dbReference type="HAMAP" id="MF_00600">
    <property type="entry name" value="CH60"/>
    <property type="match status" value="1"/>
</dbReference>
<dbReference type="InterPro" id="IPR018370">
    <property type="entry name" value="Chaperonin_Cpn60_CS"/>
</dbReference>
<dbReference type="InterPro" id="IPR001844">
    <property type="entry name" value="Cpn60/GroEL"/>
</dbReference>
<dbReference type="InterPro" id="IPR002423">
    <property type="entry name" value="Cpn60/GroEL/TCP-1"/>
</dbReference>
<dbReference type="InterPro" id="IPR027409">
    <property type="entry name" value="GroEL-like_apical_dom_sf"/>
</dbReference>
<dbReference type="InterPro" id="IPR027413">
    <property type="entry name" value="GROEL-like_equatorial_sf"/>
</dbReference>
<dbReference type="InterPro" id="IPR027410">
    <property type="entry name" value="TCP-1-like_intermed_sf"/>
</dbReference>
<dbReference type="NCBIfam" id="TIGR02348">
    <property type="entry name" value="GroEL"/>
    <property type="match status" value="1"/>
</dbReference>
<dbReference type="NCBIfam" id="NF000592">
    <property type="entry name" value="PRK00013.1"/>
    <property type="match status" value="1"/>
</dbReference>
<dbReference type="NCBIfam" id="NF009487">
    <property type="entry name" value="PRK12849.1"/>
    <property type="match status" value="1"/>
</dbReference>
<dbReference type="NCBIfam" id="NF009488">
    <property type="entry name" value="PRK12850.1"/>
    <property type="match status" value="1"/>
</dbReference>
<dbReference type="NCBIfam" id="NF009489">
    <property type="entry name" value="PRK12851.1"/>
    <property type="match status" value="1"/>
</dbReference>
<dbReference type="PANTHER" id="PTHR45633">
    <property type="entry name" value="60 KDA HEAT SHOCK PROTEIN, MITOCHONDRIAL"/>
    <property type="match status" value="1"/>
</dbReference>
<dbReference type="Pfam" id="PF00118">
    <property type="entry name" value="Cpn60_TCP1"/>
    <property type="match status" value="1"/>
</dbReference>
<dbReference type="PRINTS" id="PR00298">
    <property type="entry name" value="CHAPERONIN60"/>
</dbReference>
<dbReference type="SUPFAM" id="SSF52029">
    <property type="entry name" value="GroEL apical domain-like"/>
    <property type="match status" value="1"/>
</dbReference>
<dbReference type="SUPFAM" id="SSF48592">
    <property type="entry name" value="GroEL equatorial domain-like"/>
    <property type="match status" value="1"/>
</dbReference>
<dbReference type="SUPFAM" id="SSF54849">
    <property type="entry name" value="GroEL-intermediate domain like"/>
    <property type="match status" value="1"/>
</dbReference>
<dbReference type="PROSITE" id="PS00296">
    <property type="entry name" value="CHAPERONINS_CPN60"/>
    <property type="match status" value="1"/>
</dbReference>
<comment type="function">
    <text evidence="1">Together with its co-chaperonin GroES, plays an essential role in assisting protein folding. The GroEL-GroES system forms a nano-cage that allows encapsulation of the non-native substrate proteins and provides a physical environment optimized to promote and accelerate protein folding.</text>
</comment>
<comment type="catalytic activity">
    <reaction evidence="1">
        <text>ATP + H2O + a folded polypeptide = ADP + phosphate + an unfolded polypeptide.</text>
        <dbReference type="EC" id="5.6.1.7"/>
    </reaction>
</comment>
<comment type="subunit">
    <text evidence="1">Forms a cylinder of 14 subunits composed of two heptameric rings stacked back-to-back. Interacts with the co-chaperonin GroES.</text>
</comment>
<comment type="subcellular location">
    <subcellularLocation>
        <location evidence="1">Cytoplasm</location>
    </subcellularLocation>
</comment>
<comment type="similarity">
    <text evidence="1">Belongs to the chaperonin (HSP60) family.</text>
</comment>